<name>MIAA_CHLTA</name>
<protein>
    <recommendedName>
        <fullName evidence="1">tRNA dimethylallyltransferase</fullName>
        <ecNumber evidence="1">2.5.1.75</ecNumber>
    </recommendedName>
    <alternativeName>
        <fullName evidence="1">Dimethylallyl diphosphate:tRNA dimethylallyltransferase</fullName>
        <shortName evidence="1">DMAPP:tRNA dimethylallyltransferase</shortName>
        <shortName evidence="1">DMATase</shortName>
    </alternativeName>
    <alternativeName>
        <fullName evidence="1">Isopentenyl-diphosphate:tRNA isopentenyltransferase</fullName>
        <shortName evidence="1">IPP transferase</shortName>
        <shortName evidence="1">IPPT</shortName>
        <shortName evidence="1">IPTase</shortName>
    </alternativeName>
</protein>
<keyword id="KW-0067">ATP-binding</keyword>
<keyword id="KW-0460">Magnesium</keyword>
<keyword id="KW-0547">Nucleotide-binding</keyword>
<keyword id="KW-0808">Transferase</keyword>
<keyword id="KW-0819">tRNA processing</keyword>
<proteinExistence type="inferred from homology"/>
<accession>Q3KKS6</accession>
<feature type="chain" id="PRO_0000377111" description="tRNA dimethylallyltransferase">
    <location>
        <begin position="1"/>
        <end position="339"/>
    </location>
</feature>
<feature type="region of interest" description="Interaction with substrate tRNA" evidence="1">
    <location>
        <begin position="61"/>
        <end position="64"/>
    </location>
</feature>
<feature type="binding site" evidence="1">
    <location>
        <begin position="36"/>
        <end position="43"/>
    </location>
    <ligand>
        <name>ATP</name>
        <dbReference type="ChEBI" id="CHEBI:30616"/>
    </ligand>
</feature>
<feature type="binding site" evidence="1">
    <location>
        <begin position="38"/>
        <end position="43"/>
    </location>
    <ligand>
        <name>substrate</name>
    </ligand>
</feature>
<feature type="site" description="Interaction with substrate tRNA" evidence="1">
    <location>
        <position position="127"/>
    </location>
</feature>
<feature type="site" description="Interaction with substrate tRNA" evidence="1">
    <location>
        <position position="149"/>
    </location>
</feature>
<gene>
    <name evidence="1" type="primary">miaA</name>
    <name type="ordered locus">CTA_0836</name>
</gene>
<evidence type="ECO:0000255" key="1">
    <source>
        <dbReference type="HAMAP-Rule" id="MF_00185"/>
    </source>
</evidence>
<dbReference type="EC" id="2.5.1.75" evidence="1"/>
<dbReference type="EMBL" id="CP000051">
    <property type="protein sequence ID" value="AAX51046.1"/>
    <property type="molecule type" value="Genomic_DNA"/>
</dbReference>
<dbReference type="RefSeq" id="WP_011324858.1">
    <property type="nucleotide sequence ID" value="NC_007429.1"/>
</dbReference>
<dbReference type="SMR" id="Q3KKS6"/>
<dbReference type="KEGG" id="cta:CTA_0836"/>
<dbReference type="HOGENOM" id="CLU_032616_0_2_0"/>
<dbReference type="Proteomes" id="UP000002532">
    <property type="component" value="Chromosome"/>
</dbReference>
<dbReference type="GO" id="GO:0005524">
    <property type="term" value="F:ATP binding"/>
    <property type="evidence" value="ECO:0007669"/>
    <property type="project" value="UniProtKB-UniRule"/>
</dbReference>
<dbReference type="GO" id="GO:0052381">
    <property type="term" value="F:tRNA dimethylallyltransferase activity"/>
    <property type="evidence" value="ECO:0007669"/>
    <property type="project" value="UniProtKB-UniRule"/>
</dbReference>
<dbReference type="GO" id="GO:0006400">
    <property type="term" value="P:tRNA modification"/>
    <property type="evidence" value="ECO:0007669"/>
    <property type="project" value="TreeGrafter"/>
</dbReference>
<dbReference type="Gene3D" id="1.10.20.140">
    <property type="match status" value="1"/>
</dbReference>
<dbReference type="Gene3D" id="3.40.50.300">
    <property type="entry name" value="P-loop containing nucleotide triphosphate hydrolases"/>
    <property type="match status" value="1"/>
</dbReference>
<dbReference type="HAMAP" id="MF_00185">
    <property type="entry name" value="IPP_trans"/>
    <property type="match status" value="1"/>
</dbReference>
<dbReference type="InterPro" id="IPR039657">
    <property type="entry name" value="Dimethylallyltransferase"/>
</dbReference>
<dbReference type="InterPro" id="IPR018022">
    <property type="entry name" value="IPT"/>
</dbReference>
<dbReference type="InterPro" id="IPR027417">
    <property type="entry name" value="P-loop_NTPase"/>
</dbReference>
<dbReference type="NCBIfam" id="TIGR00174">
    <property type="entry name" value="miaA"/>
    <property type="match status" value="1"/>
</dbReference>
<dbReference type="PANTHER" id="PTHR11088">
    <property type="entry name" value="TRNA DIMETHYLALLYLTRANSFERASE"/>
    <property type="match status" value="1"/>
</dbReference>
<dbReference type="PANTHER" id="PTHR11088:SF60">
    <property type="entry name" value="TRNA DIMETHYLALLYLTRANSFERASE"/>
    <property type="match status" value="1"/>
</dbReference>
<dbReference type="Pfam" id="PF01715">
    <property type="entry name" value="IPPT"/>
    <property type="match status" value="1"/>
</dbReference>
<dbReference type="SUPFAM" id="SSF52540">
    <property type="entry name" value="P-loop containing nucleoside triphosphate hydrolases"/>
    <property type="match status" value="2"/>
</dbReference>
<organism>
    <name type="scientific">Chlamydia trachomatis serovar A (strain ATCC VR-571B / DSM 19440 / HAR-13)</name>
    <dbReference type="NCBI Taxonomy" id="315277"/>
    <lineage>
        <taxon>Bacteria</taxon>
        <taxon>Pseudomonadati</taxon>
        <taxon>Chlamydiota</taxon>
        <taxon>Chlamydiia</taxon>
        <taxon>Chlamydiales</taxon>
        <taxon>Chlamydiaceae</taxon>
        <taxon>Chlamydia/Chlamydophila group</taxon>
        <taxon>Chlamydia</taxon>
    </lineage>
</organism>
<reference key="1">
    <citation type="journal article" date="2005" name="Infect. Immun.">
        <title>Comparative genomic analysis of Chlamydia trachomatis oculotropic and genitotropic strains.</title>
        <authorList>
            <person name="Carlson J.H."/>
            <person name="Porcella S.F."/>
            <person name="McClarty G."/>
            <person name="Caldwell H.D."/>
        </authorList>
    </citation>
    <scope>NUCLEOTIDE SEQUENCE [LARGE SCALE GENOMIC DNA]</scope>
    <source>
        <strain>ATCC VR-571B / DSM 19440 / HAR-13</strain>
    </source>
</reference>
<comment type="function">
    <text evidence="1">Catalyzes the transfer of a dimethylallyl group onto the adenine at position 37 in tRNAs that read codons beginning with uridine, leading to the formation of N6-(dimethylallyl)adenosine (i(6)A).</text>
</comment>
<comment type="catalytic activity">
    <reaction evidence="1">
        <text>adenosine(37) in tRNA + dimethylallyl diphosphate = N(6)-dimethylallyladenosine(37) in tRNA + diphosphate</text>
        <dbReference type="Rhea" id="RHEA:26482"/>
        <dbReference type="Rhea" id="RHEA-COMP:10162"/>
        <dbReference type="Rhea" id="RHEA-COMP:10375"/>
        <dbReference type="ChEBI" id="CHEBI:33019"/>
        <dbReference type="ChEBI" id="CHEBI:57623"/>
        <dbReference type="ChEBI" id="CHEBI:74411"/>
        <dbReference type="ChEBI" id="CHEBI:74415"/>
        <dbReference type="EC" id="2.5.1.75"/>
    </reaction>
</comment>
<comment type="cofactor">
    <cofactor evidence="1">
        <name>Mg(2+)</name>
        <dbReference type="ChEBI" id="CHEBI:18420"/>
    </cofactor>
</comment>
<comment type="subunit">
    <text evidence="1">Monomer.</text>
</comment>
<comment type="similarity">
    <text evidence="1">Belongs to the IPP transferase family.</text>
</comment>
<sequence>MSSSSSSGAATGFAVCSDPQKSFSKMFKRTVILLAGPTGSGKTAVSLKLAPLVDGEIISVDSMQVYQGMDIGTAKVSLADRKEVPHHLIDVCHVQESFNAVDFYYHAVQACQDILSRNKVPILVGGTGFYFHTFLSGPPSGPSPDFVLREQLTLEAQERGISALYQELELLDPVYAATITKHDKNKIIRALEIIRKTGSKVSSYAWQSTVNESKEYHCRGWLLSPDPELLRHNILERCDQMLEEGLLDEVQALLAAGIKGNSSASRAIGYREWIEFLDLGSPPDLFEITKQKFITNTWRYTKKQRTWFKRCSLFRELRPMGMTLDDMAKKIAQDYFLCG</sequence>